<reference key="1">
    <citation type="journal article" date="2009" name="PLoS Genet.">
        <title>Organised genome dynamics in the Escherichia coli species results in highly diverse adaptive paths.</title>
        <authorList>
            <person name="Touchon M."/>
            <person name="Hoede C."/>
            <person name="Tenaillon O."/>
            <person name="Barbe V."/>
            <person name="Baeriswyl S."/>
            <person name="Bidet P."/>
            <person name="Bingen E."/>
            <person name="Bonacorsi S."/>
            <person name="Bouchier C."/>
            <person name="Bouvet O."/>
            <person name="Calteau A."/>
            <person name="Chiapello H."/>
            <person name="Clermont O."/>
            <person name="Cruveiller S."/>
            <person name="Danchin A."/>
            <person name="Diard M."/>
            <person name="Dossat C."/>
            <person name="Karoui M.E."/>
            <person name="Frapy E."/>
            <person name="Garry L."/>
            <person name="Ghigo J.M."/>
            <person name="Gilles A.M."/>
            <person name="Johnson J."/>
            <person name="Le Bouguenec C."/>
            <person name="Lescat M."/>
            <person name="Mangenot S."/>
            <person name="Martinez-Jehanne V."/>
            <person name="Matic I."/>
            <person name="Nassif X."/>
            <person name="Oztas S."/>
            <person name="Petit M.A."/>
            <person name="Pichon C."/>
            <person name="Rouy Z."/>
            <person name="Ruf C.S."/>
            <person name="Schneider D."/>
            <person name="Tourret J."/>
            <person name="Vacherie B."/>
            <person name="Vallenet D."/>
            <person name="Medigue C."/>
            <person name="Rocha E.P.C."/>
            <person name="Denamur E."/>
        </authorList>
    </citation>
    <scope>NUCLEOTIDE SEQUENCE [LARGE SCALE GENOMIC DNA]</scope>
    <source>
        <strain>55989 / EAEC</strain>
    </source>
</reference>
<name>RL31B_ECO55</name>
<accession>B7L427</accession>
<proteinExistence type="inferred from homology"/>
<gene>
    <name evidence="1" type="primary">rpmE2</name>
    <name type="ordered locus">EC55989_0300</name>
</gene>
<protein>
    <recommendedName>
        <fullName evidence="1">Large ribosomal subunit protein bL31B</fullName>
    </recommendedName>
    <alternativeName>
        <fullName evidence="2">50S ribosomal protein L31 type B</fullName>
    </alternativeName>
</protein>
<organism>
    <name type="scientific">Escherichia coli (strain 55989 / EAEC)</name>
    <dbReference type="NCBI Taxonomy" id="585055"/>
    <lineage>
        <taxon>Bacteria</taxon>
        <taxon>Pseudomonadati</taxon>
        <taxon>Pseudomonadota</taxon>
        <taxon>Gammaproteobacteria</taxon>
        <taxon>Enterobacterales</taxon>
        <taxon>Enterobacteriaceae</taxon>
        <taxon>Escherichia</taxon>
    </lineage>
</organism>
<feature type="chain" id="PRO_1000176986" description="Large ribosomal subunit protein bL31B">
    <location>
        <begin position="1"/>
        <end position="87"/>
    </location>
</feature>
<dbReference type="EMBL" id="CU928145">
    <property type="protein sequence ID" value="CAU96178.1"/>
    <property type="molecule type" value="Genomic_DNA"/>
</dbReference>
<dbReference type="RefSeq" id="WP_000803990.1">
    <property type="nucleotide sequence ID" value="NC_011748.1"/>
</dbReference>
<dbReference type="SMR" id="B7L427"/>
<dbReference type="KEGG" id="eck:EC55989_0300"/>
<dbReference type="HOGENOM" id="CLU_114306_2_1_6"/>
<dbReference type="Proteomes" id="UP000000746">
    <property type="component" value="Chromosome"/>
</dbReference>
<dbReference type="GO" id="GO:1990904">
    <property type="term" value="C:ribonucleoprotein complex"/>
    <property type="evidence" value="ECO:0007669"/>
    <property type="project" value="UniProtKB-KW"/>
</dbReference>
<dbReference type="GO" id="GO:0005840">
    <property type="term" value="C:ribosome"/>
    <property type="evidence" value="ECO:0007669"/>
    <property type="project" value="UniProtKB-KW"/>
</dbReference>
<dbReference type="GO" id="GO:0003735">
    <property type="term" value="F:structural constituent of ribosome"/>
    <property type="evidence" value="ECO:0007669"/>
    <property type="project" value="InterPro"/>
</dbReference>
<dbReference type="GO" id="GO:0006412">
    <property type="term" value="P:translation"/>
    <property type="evidence" value="ECO:0007669"/>
    <property type="project" value="UniProtKB-UniRule"/>
</dbReference>
<dbReference type="FunFam" id="4.10.830.30:FF:000002">
    <property type="entry name" value="50S ribosomal protein L31 type B"/>
    <property type="match status" value="1"/>
</dbReference>
<dbReference type="Gene3D" id="4.10.830.30">
    <property type="entry name" value="Ribosomal protein L31"/>
    <property type="match status" value="1"/>
</dbReference>
<dbReference type="HAMAP" id="MF_00502">
    <property type="entry name" value="Ribosomal_bL31_2"/>
    <property type="match status" value="1"/>
</dbReference>
<dbReference type="InterPro" id="IPR034704">
    <property type="entry name" value="Ribosomal_bL28/bL31-like_sf"/>
</dbReference>
<dbReference type="InterPro" id="IPR002150">
    <property type="entry name" value="Ribosomal_bL31"/>
</dbReference>
<dbReference type="InterPro" id="IPR027493">
    <property type="entry name" value="Ribosomal_bL31_B"/>
</dbReference>
<dbReference type="InterPro" id="IPR042105">
    <property type="entry name" value="Ribosomal_bL31_sf"/>
</dbReference>
<dbReference type="NCBIfam" id="TIGR00105">
    <property type="entry name" value="L31"/>
    <property type="match status" value="1"/>
</dbReference>
<dbReference type="NCBIfam" id="NF002462">
    <property type="entry name" value="PRK01678.1"/>
    <property type="match status" value="1"/>
</dbReference>
<dbReference type="PANTHER" id="PTHR33280">
    <property type="entry name" value="50S RIBOSOMAL PROTEIN L31, CHLOROPLASTIC"/>
    <property type="match status" value="1"/>
</dbReference>
<dbReference type="PANTHER" id="PTHR33280:SF1">
    <property type="entry name" value="LARGE RIBOSOMAL SUBUNIT PROTEIN BL31C"/>
    <property type="match status" value="1"/>
</dbReference>
<dbReference type="Pfam" id="PF01197">
    <property type="entry name" value="Ribosomal_L31"/>
    <property type="match status" value="1"/>
</dbReference>
<dbReference type="PRINTS" id="PR01249">
    <property type="entry name" value="RIBOSOMALL31"/>
</dbReference>
<dbReference type="SUPFAM" id="SSF143800">
    <property type="entry name" value="L28p-like"/>
    <property type="match status" value="1"/>
</dbReference>
<dbReference type="PROSITE" id="PS01143">
    <property type="entry name" value="RIBOSOMAL_L31"/>
    <property type="match status" value="1"/>
</dbReference>
<sequence>MKPNIHPEYRTVVFHDTSIDEYFKIGSTIKTDREIELDGVTYPYVTIDVSSKSHPFYTGKLRTVASEGNVARFTQRFGRFVSTKKGA</sequence>
<keyword id="KW-1185">Reference proteome</keyword>
<keyword id="KW-0687">Ribonucleoprotein</keyword>
<keyword id="KW-0689">Ribosomal protein</keyword>
<evidence type="ECO:0000255" key="1">
    <source>
        <dbReference type="HAMAP-Rule" id="MF_00502"/>
    </source>
</evidence>
<evidence type="ECO:0000305" key="2"/>
<comment type="subunit">
    <text evidence="1">Part of the 50S ribosomal subunit.</text>
</comment>
<comment type="similarity">
    <text evidence="1">Belongs to the bacterial ribosomal protein bL31 family. Type B subfamily.</text>
</comment>